<feature type="signal peptide" evidence="1">
    <location>
        <begin position="1"/>
        <end position="28"/>
    </location>
</feature>
<feature type="chain" id="PRO_0000024287" description="Prolactin-inducible protein homolog">
    <location>
        <begin position="29"/>
        <end position="146"/>
    </location>
</feature>
<feature type="modified residue" description="Pyrrolidone carboxylic acid" evidence="2">
    <location>
        <position position="29"/>
    </location>
</feature>
<feature type="glycosylation site" description="N-linked (GlcNAc...) asparagine" evidence="3">
    <location>
        <position position="105"/>
    </location>
</feature>
<feature type="disulfide bond" evidence="1">
    <location>
        <begin position="65"/>
        <end position="91"/>
    </location>
</feature>
<feature type="disulfide bond" evidence="1">
    <location>
        <begin position="89"/>
        <end position="123"/>
    </location>
</feature>
<accession>P60987</accession>
<gene>
    <name type="primary">PIP</name>
</gene>
<organism>
    <name type="scientific">Cavia porcellus</name>
    <name type="common">Guinea pig</name>
    <dbReference type="NCBI Taxonomy" id="10141"/>
    <lineage>
        <taxon>Eukaryota</taxon>
        <taxon>Metazoa</taxon>
        <taxon>Chordata</taxon>
        <taxon>Craniata</taxon>
        <taxon>Vertebrata</taxon>
        <taxon>Euteleostomi</taxon>
        <taxon>Mammalia</taxon>
        <taxon>Eutheria</taxon>
        <taxon>Euarchontoglires</taxon>
        <taxon>Glires</taxon>
        <taxon>Rodentia</taxon>
        <taxon>Hystricomorpha</taxon>
        <taxon>Caviidae</taxon>
        <taxon>Cavia</taxon>
    </lineage>
</organism>
<name>PIP_CAVPO</name>
<proteinExistence type="inferred from homology"/>
<keyword id="KW-1015">Disulfide bond</keyword>
<keyword id="KW-0325">Glycoprotein</keyword>
<keyword id="KW-0873">Pyrrolidone carboxylic acid</keyword>
<keyword id="KW-1185">Reference proteome</keyword>
<keyword id="KW-0964">Secreted</keyword>
<keyword id="KW-0732">Signal</keyword>
<dbReference type="EMBL" id="AB098479">
    <property type="protein sequence ID" value="BAD04927.1"/>
    <property type="molecule type" value="Genomic_DNA"/>
</dbReference>
<dbReference type="RefSeq" id="NP_001166871.1">
    <property type="nucleotide sequence ID" value="NM_001173400.1"/>
</dbReference>
<dbReference type="SMR" id="P60987"/>
<dbReference type="FunCoup" id="P60987">
    <property type="interactions" value="35"/>
</dbReference>
<dbReference type="STRING" id="10141.ENSCPOP00000013948"/>
<dbReference type="GlyCosmos" id="P60987">
    <property type="glycosylation" value="1 site, No reported glycans"/>
</dbReference>
<dbReference type="Ensembl" id="ENSCPOT00000015618.3">
    <property type="protein sequence ID" value="ENSCPOP00000013948.2"/>
    <property type="gene ID" value="ENSCPOG00000015467.4"/>
</dbReference>
<dbReference type="GeneID" id="100379600"/>
<dbReference type="KEGG" id="cpoc:100379600"/>
<dbReference type="CTD" id="5304"/>
<dbReference type="VEuPathDB" id="HostDB:ENSCPOG00000015467"/>
<dbReference type="eggNOG" id="ENOG502T2PG">
    <property type="taxonomic scope" value="Eukaryota"/>
</dbReference>
<dbReference type="GeneTree" id="ENSGT00390000002099"/>
<dbReference type="InParanoid" id="P60987"/>
<dbReference type="OMA" id="ECMVIKT"/>
<dbReference type="OrthoDB" id="9835042at2759"/>
<dbReference type="Proteomes" id="UP000005447">
    <property type="component" value="Unassembled WGS sequence"/>
</dbReference>
<dbReference type="Bgee" id="ENSCPOG00000015467">
    <property type="expression patterns" value="Expressed in anatomical system and 2 other cell types or tissues"/>
</dbReference>
<dbReference type="GO" id="GO:0005615">
    <property type="term" value="C:extracellular space"/>
    <property type="evidence" value="ECO:0007669"/>
    <property type="project" value="Ensembl"/>
</dbReference>
<dbReference type="GO" id="GO:0005634">
    <property type="term" value="C:nucleus"/>
    <property type="evidence" value="ECO:0007669"/>
    <property type="project" value="Ensembl"/>
</dbReference>
<dbReference type="GO" id="GO:0004190">
    <property type="term" value="F:aspartic-type endopeptidase activity"/>
    <property type="evidence" value="ECO:0007669"/>
    <property type="project" value="Ensembl"/>
</dbReference>
<dbReference type="GO" id="GO:0042802">
    <property type="term" value="F:identical protein binding"/>
    <property type="evidence" value="ECO:0007669"/>
    <property type="project" value="Ensembl"/>
</dbReference>
<dbReference type="GO" id="GO:0019864">
    <property type="term" value="F:IgG binding"/>
    <property type="evidence" value="ECO:0007669"/>
    <property type="project" value="Ensembl"/>
</dbReference>
<dbReference type="GO" id="GO:0001580">
    <property type="term" value="P:detection of chemical stimulus involved in sensory perception of bitter taste"/>
    <property type="evidence" value="ECO:0007669"/>
    <property type="project" value="Ensembl"/>
</dbReference>
<dbReference type="GO" id="GO:0070233">
    <property type="term" value="P:negative regulation of T cell apoptotic process"/>
    <property type="evidence" value="ECO:0007669"/>
    <property type="project" value="Ensembl"/>
</dbReference>
<dbReference type="GO" id="GO:0010628">
    <property type="term" value="P:positive regulation of gene expression"/>
    <property type="evidence" value="ECO:0007669"/>
    <property type="project" value="Ensembl"/>
</dbReference>
<dbReference type="GO" id="GO:0006508">
    <property type="term" value="P:proteolysis"/>
    <property type="evidence" value="ECO:0007669"/>
    <property type="project" value="Ensembl"/>
</dbReference>
<dbReference type="GO" id="GO:0002682">
    <property type="term" value="P:regulation of immune system process"/>
    <property type="evidence" value="ECO:0007669"/>
    <property type="project" value="TreeGrafter"/>
</dbReference>
<dbReference type="FunFam" id="2.60.40.10:FF:001572">
    <property type="entry name" value="Prolactin-inducible protein homolog"/>
    <property type="match status" value="1"/>
</dbReference>
<dbReference type="Gene3D" id="2.60.40.10">
    <property type="entry name" value="Immunoglobulins"/>
    <property type="match status" value="1"/>
</dbReference>
<dbReference type="InterPro" id="IPR013783">
    <property type="entry name" value="Ig-like_fold"/>
</dbReference>
<dbReference type="InterPro" id="IPR014756">
    <property type="entry name" value="Ig_E-set"/>
</dbReference>
<dbReference type="InterPro" id="IPR007990">
    <property type="entry name" value="PIP"/>
</dbReference>
<dbReference type="PANTHER" id="PTHR15096:SF5">
    <property type="entry name" value="PROLACTIN-INDUCIBLE PROTEIN"/>
    <property type="match status" value="1"/>
</dbReference>
<dbReference type="PANTHER" id="PTHR15096">
    <property type="entry name" value="PROLACTIN-INDUCIBLE PROTEIN/SEMINAL VESICLE ANTIGEN"/>
    <property type="match status" value="1"/>
</dbReference>
<dbReference type="Pfam" id="PF05326">
    <property type="entry name" value="SVA"/>
    <property type="match status" value="1"/>
</dbReference>
<dbReference type="PIRSF" id="PIRSF002572">
    <property type="entry name" value="PIP-GCDFP-15"/>
    <property type="match status" value="1"/>
</dbReference>
<dbReference type="SUPFAM" id="SSF81296">
    <property type="entry name" value="E set domains"/>
    <property type="match status" value="1"/>
</dbReference>
<comment type="subunit">
    <text evidence="1">Monomer. Interacts with AZGP1 (By similarity).</text>
</comment>
<comment type="subcellular location">
    <subcellularLocation>
        <location evidence="1">Secreted</location>
    </subcellularLocation>
</comment>
<comment type="similarity">
    <text evidence="4">Belongs to the PIP family.</text>
</comment>
<evidence type="ECO:0000250" key="1"/>
<evidence type="ECO:0000250" key="2">
    <source>
        <dbReference type="UniProtKB" id="P12273"/>
    </source>
</evidence>
<evidence type="ECO:0000255" key="3"/>
<evidence type="ECO:0000305" key="4"/>
<sequence>MLTFQFLFRASPATLLLTLYLQLGVITAQEDTRRTIILSTELPQEVTANELTTLKLKVETELRECMVIKAYLVSSKPLAGPFNYKYTGCLCSDYPRTFYWDFQTNSTVRIATVVDIIRELNICPDDQAVVPIKSNRYYAITDLTVN</sequence>
<protein>
    <recommendedName>
        <fullName>Prolactin-inducible protein homolog</fullName>
    </recommendedName>
    <alternativeName>
        <fullName>Prolactin-induced protein</fullName>
    </alternativeName>
</protein>
<reference key="1">
    <citation type="journal article" date="2004" name="Gene">
        <title>Divergent evolution of the prolactin-inducible protein gene and related genes in the mouse genome.</title>
        <authorList>
            <person name="Osawa M."/>
            <person name="Horiuchi H."/>
            <person name="Tian W."/>
            <person name="Kaneko M."/>
        </authorList>
    </citation>
    <scope>NUCLEOTIDE SEQUENCE [GENOMIC DNA]</scope>
</reference>